<name>ACR4_ARATH</name>
<proteinExistence type="evidence at transcript level"/>
<feature type="chain" id="PRO_0000431458" description="ACT domain-containing protein ACR4">
    <location>
        <begin position="1"/>
        <end position="451"/>
    </location>
</feature>
<feature type="domain" description="ACT 1" evidence="1">
    <location>
        <begin position="35"/>
        <end position="118"/>
    </location>
</feature>
<feature type="domain" description="ACT 2" evidence="1">
    <location>
        <begin position="123"/>
        <end position="200"/>
    </location>
</feature>
<feature type="domain" description="ACT 3" evidence="1">
    <location>
        <begin position="259"/>
        <end position="335"/>
    </location>
</feature>
<feature type="domain" description="ACT 4" evidence="1">
    <location>
        <begin position="337"/>
        <end position="416"/>
    </location>
</feature>
<feature type="region of interest" description="Disordered" evidence="2">
    <location>
        <begin position="409"/>
        <end position="428"/>
    </location>
</feature>
<feature type="compositionally biased region" description="Polar residues" evidence="2">
    <location>
        <begin position="410"/>
        <end position="420"/>
    </location>
</feature>
<gene>
    <name evidence="4" type="primary">ACR4</name>
    <name evidence="6" type="ordered locus">At1g69040</name>
    <name evidence="7" type="ORF">F4N2.2</name>
</gene>
<comment type="function">
    <text evidence="4">May bind amino acids.</text>
</comment>
<comment type="alternative products">
    <event type="alternative splicing"/>
    <isoform>
        <id>Q8LJW3-1</id>
        <name>1</name>
        <sequence type="displayed"/>
    </isoform>
    <text>A number of isoforms are produced. According to EST sequences.</text>
</comment>
<comment type="tissue specificity">
    <text evidence="3">Highly expressed in flowers and at lower levels in leaves and siliques.</text>
</comment>
<comment type="induction">
    <text evidence="3">By the cytokinin benzyladenine (BA) and cold stress.</text>
</comment>
<comment type="sequence caution" evidence="5">
    <conflict type="erroneous initiation">
        <sequence resource="EMBL-CDS" id="AAF27052"/>
    </conflict>
    <text>Truncated N-terminus.</text>
</comment>
<evidence type="ECO:0000255" key="1">
    <source>
        <dbReference type="PROSITE-ProRule" id="PRU01007"/>
    </source>
</evidence>
<evidence type="ECO:0000256" key="2">
    <source>
        <dbReference type="SAM" id="MobiDB-lite"/>
    </source>
</evidence>
<evidence type="ECO:0000269" key="3">
    <source>
    </source>
</evidence>
<evidence type="ECO:0000303" key="4">
    <source>
    </source>
</evidence>
<evidence type="ECO:0000305" key="5"/>
<evidence type="ECO:0000312" key="6">
    <source>
        <dbReference type="Araport" id="AT1G69040"/>
    </source>
</evidence>
<evidence type="ECO:0000312" key="7">
    <source>
        <dbReference type="EMBL" id="AAF27052.1"/>
    </source>
</evidence>
<sequence>MSFSQDMDNEYEKLIRRMNPPRVVIDNDSCKKATVIRVDSANEYGILLEVVQILTDLNLTITKAYISSDGGWFMDVFNVTDQDGNKVTDEVVLDYIQKSLGPEACFSTSMRSVGVIPSTDSTVIELTGCDRPGLLSELSAVLTHLKCSVLNAEIWTHNTRAAAVMQVTDDLTGCGISDPERLSRIKNLLRNVLKGSNTPREAKTVVSHGEVHTDRRLHQMMFEDRDYEHRLVDDDSSIQDERQRPDVCVDNWLDKDYSVVTVRCKDRPKLLFDTVCTLTDMQYVVFHGSVDTEGTEAFQEYYVRHIDGSPVKSEAEKQRVIQCLEAAIKRRVSEGLKLELCTTDRVGLLSNVTRIFRENSLTVTRAEVKTKGGKALNTFYVSDASGYSIDAKTIDSIRQTIGQTILKVKNNPQEQQQRQKSPSHESPTRFLFGGLFKSKSFVNFGLVRSYS</sequence>
<accession>Q8LJW3</accession>
<accession>Q8GWT8</accession>
<accession>Q9LQB5</accession>
<protein>
    <recommendedName>
        <fullName evidence="5">ACT domain-containing protein ACR4</fullName>
    </recommendedName>
    <alternativeName>
        <fullName evidence="4">Protein ACT DOMAIN REPEATS 4</fullName>
    </alternativeName>
</protein>
<reference key="1">
    <citation type="journal article" date="2002" name="Plant Physiol.">
        <title>Molecular characterization of a novel gene family encoding ACT domain repeat proteins in Arabidopsis.</title>
        <authorList>
            <person name="Hsieh M.-H."/>
            <person name="Goodman H.M."/>
        </authorList>
    </citation>
    <scope>NUCLEOTIDE SEQUENCE [MRNA]</scope>
    <scope>FUNCTION</scope>
    <scope>TISSUE SPECIFICITY</scope>
    <scope>INDUCTION</scope>
</reference>
<reference key="2">
    <citation type="journal article" date="2000" name="Nature">
        <title>Sequence and analysis of chromosome 1 of the plant Arabidopsis thaliana.</title>
        <authorList>
            <person name="Theologis A."/>
            <person name="Ecker J.R."/>
            <person name="Palm C.J."/>
            <person name="Federspiel N.A."/>
            <person name="Kaul S."/>
            <person name="White O."/>
            <person name="Alonso J."/>
            <person name="Altafi H."/>
            <person name="Araujo R."/>
            <person name="Bowman C.L."/>
            <person name="Brooks S.Y."/>
            <person name="Buehler E."/>
            <person name="Chan A."/>
            <person name="Chao Q."/>
            <person name="Chen H."/>
            <person name="Cheuk R.F."/>
            <person name="Chin C.W."/>
            <person name="Chung M.K."/>
            <person name="Conn L."/>
            <person name="Conway A.B."/>
            <person name="Conway A.R."/>
            <person name="Creasy T.H."/>
            <person name="Dewar K."/>
            <person name="Dunn P."/>
            <person name="Etgu P."/>
            <person name="Feldblyum T.V."/>
            <person name="Feng J.-D."/>
            <person name="Fong B."/>
            <person name="Fujii C.Y."/>
            <person name="Gill J.E."/>
            <person name="Goldsmith A.D."/>
            <person name="Haas B."/>
            <person name="Hansen N.F."/>
            <person name="Hughes B."/>
            <person name="Huizar L."/>
            <person name="Hunter J.L."/>
            <person name="Jenkins J."/>
            <person name="Johnson-Hopson C."/>
            <person name="Khan S."/>
            <person name="Khaykin E."/>
            <person name="Kim C.J."/>
            <person name="Koo H.L."/>
            <person name="Kremenetskaia I."/>
            <person name="Kurtz D.B."/>
            <person name="Kwan A."/>
            <person name="Lam B."/>
            <person name="Langin-Hooper S."/>
            <person name="Lee A."/>
            <person name="Lee J.M."/>
            <person name="Lenz C.A."/>
            <person name="Li J.H."/>
            <person name="Li Y.-P."/>
            <person name="Lin X."/>
            <person name="Liu S.X."/>
            <person name="Liu Z.A."/>
            <person name="Luros J.S."/>
            <person name="Maiti R."/>
            <person name="Marziali A."/>
            <person name="Militscher J."/>
            <person name="Miranda M."/>
            <person name="Nguyen M."/>
            <person name="Nierman W.C."/>
            <person name="Osborne B.I."/>
            <person name="Pai G."/>
            <person name="Peterson J."/>
            <person name="Pham P.K."/>
            <person name="Rizzo M."/>
            <person name="Rooney T."/>
            <person name="Rowley D."/>
            <person name="Sakano H."/>
            <person name="Salzberg S.L."/>
            <person name="Schwartz J.R."/>
            <person name="Shinn P."/>
            <person name="Southwick A.M."/>
            <person name="Sun H."/>
            <person name="Tallon L.J."/>
            <person name="Tambunga G."/>
            <person name="Toriumi M.J."/>
            <person name="Town C.D."/>
            <person name="Utterback T."/>
            <person name="Van Aken S."/>
            <person name="Vaysberg M."/>
            <person name="Vysotskaia V.S."/>
            <person name="Walker M."/>
            <person name="Wu D."/>
            <person name="Yu G."/>
            <person name="Fraser C.M."/>
            <person name="Venter J.C."/>
            <person name="Davis R.W."/>
        </authorList>
    </citation>
    <scope>NUCLEOTIDE SEQUENCE [LARGE SCALE GENOMIC DNA]</scope>
    <source>
        <strain>cv. Columbia</strain>
    </source>
</reference>
<reference key="3">
    <citation type="journal article" date="2017" name="Plant J.">
        <title>Araport11: a complete reannotation of the Arabidopsis thaliana reference genome.</title>
        <authorList>
            <person name="Cheng C.Y."/>
            <person name="Krishnakumar V."/>
            <person name="Chan A.P."/>
            <person name="Thibaud-Nissen F."/>
            <person name="Schobel S."/>
            <person name="Town C.D."/>
        </authorList>
    </citation>
    <scope>GENOME REANNOTATION</scope>
    <source>
        <strain>cv. Columbia</strain>
    </source>
</reference>
<reference key="4">
    <citation type="submission" date="2006-10" db="EMBL/GenBank/DDBJ databases">
        <title>Arabidopsis ORF Clone.</title>
        <authorList>
            <person name="Bautista V.R."/>
            <person name="Kim C.J."/>
            <person name="Chen H."/>
            <person name="Quinitio C."/>
            <person name="Ecker J.R."/>
        </authorList>
    </citation>
    <scope>NUCLEOTIDE SEQUENCE [LARGE SCALE MRNA]</scope>
    <source>
        <strain>cv. Columbia</strain>
    </source>
</reference>
<reference key="5">
    <citation type="journal article" date="2002" name="Science">
        <title>Functional annotation of a full-length Arabidopsis cDNA collection.</title>
        <authorList>
            <person name="Seki M."/>
            <person name="Narusaka M."/>
            <person name="Kamiya A."/>
            <person name="Ishida J."/>
            <person name="Satou M."/>
            <person name="Sakurai T."/>
            <person name="Nakajima M."/>
            <person name="Enju A."/>
            <person name="Akiyama K."/>
            <person name="Oono Y."/>
            <person name="Muramatsu M."/>
            <person name="Hayashizaki Y."/>
            <person name="Kawai J."/>
            <person name="Carninci P."/>
            <person name="Itoh M."/>
            <person name="Ishii Y."/>
            <person name="Arakawa T."/>
            <person name="Shibata K."/>
            <person name="Shinagawa A."/>
            <person name="Shinozaki K."/>
        </authorList>
    </citation>
    <scope>NUCLEOTIDE SEQUENCE [LARGE SCALE MRNA] OF 22-451</scope>
    <source>
        <strain>cv. Columbia</strain>
    </source>
</reference>
<organism>
    <name type="scientific">Arabidopsis thaliana</name>
    <name type="common">Mouse-ear cress</name>
    <dbReference type="NCBI Taxonomy" id="3702"/>
    <lineage>
        <taxon>Eukaryota</taxon>
        <taxon>Viridiplantae</taxon>
        <taxon>Streptophyta</taxon>
        <taxon>Embryophyta</taxon>
        <taxon>Tracheophyta</taxon>
        <taxon>Spermatophyta</taxon>
        <taxon>Magnoliopsida</taxon>
        <taxon>eudicotyledons</taxon>
        <taxon>Gunneridae</taxon>
        <taxon>Pentapetalae</taxon>
        <taxon>rosids</taxon>
        <taxon>malvids</taxon>
        <taxon>Brassicales</taxon>
        <taxon>Brassicaceae</taxon>
        <taxon>Camelineae</taxon>
        <taxon>Arabidopsis</taxon>
    </lineage>
</organism>
<keyword id="KW-0025">Alternative splicing</keyword>
<keyword id="KW-1185">Reference proteome</keyword>
<keyword id="KW-0677">Repeat</keyword>
<dbReference type="EMBL" id="AF528060">
    <property type="protein sequence ID" value="AAM93429.1"/>
    <property type="molecule type" value="mRNA"/>
</dbReference>
<dbReference type="EMBL" id="AC008262">
    <property type="protein sequence ID" value="AAF27052.1"/>
    <property type="status" value="ALT_INIT"/>
    <property type="molecule type" value="Genomic_DNA"/>
</dbReference>
<dbReference type="EMBL" id="CP002684">
    <property type="protein sequence ID" value="AEE34878.1"/>
    <property type="molecule type" value="Genomic_DNA"/>
</dbReference>
<dbReference type="EMBL" id="BT029177">
    <property type="protein sequence ID" value="ABJ17112.1"/>
    <property type="molecule type" value="mRNA"/>
</dbReference>
<dbReference type="EMBL" id="AK118644">
    <property type="protein sequence ID" value="BAC43240.1"/>
    <property type="molecule type" value="mRNA"/>
</dbReference>
<dbReference type="PIR" id="H96714">
    <property type="entry name" value="H96714"/>
</dbReference>
<dbReference type="RefSeq" id="NP_177067.1">
    <molecule id="Q8LJW3-1"/>
    <property type="nucleotide sequence ID" value="NM_105575.3"/>
</dbReference>
<dbReference type="FunCoup" id="Q8LJW3">
    <property type="interactions" value="228"/>
</dbReference>
<dbReference type="iPTMnet" id="Q8LJW3"/>
<dbReference type="PaxDb" id="3702-AT1G69040.2"/>
<dbReference type="ProteomicsDB" id="244396">
    <molecule id="Q8LJW3-1"/>
</dbReference>
<dbReference type="EnsemblPlants" id="AT1G69040.1">
    <molecule id="Q8LJW3-1"/>
    <property type="protein sequence ID" value="AT1G69040.1"/>
    <property type="gene ID" value="AT1G69040"/>
</dbReference>
<dbReference type="GeneID" id="843236"/>
<dbReference type="Gramene" id="AT1G69040.1">
    <molecule id="Q8LJW3-1"/>
    <property type="protein sequence ID" value="AT1G69040.1"/>
    <property type="gene ID" value="AT1G69040"/>
</dbReference>
<dbReference type="KEGG" id="ath:AT1G69040"/>
<dbReference type="Araport" id="AT1G69040"/>
<dbReference type="TAIR" id="AT1G69040">
    <property type="gene designation" value="ACR4"/>
</dbReference>
<dbReference type="eggNOG" id="ENOG502QT1H">
    <property type="taxonomic scope" value="Eukaryota"/>
</dbReference>
<dbReference type="HOGENOM" id="CLU_031332_3_0_1"/>
<dbReference type="InParanoid" id="Q8LJW3"/>
<dbReference type="OMA" id="GPESCFA"/>
<dbReference type="OrthoDB" id="2019938at2759"/>
<dbReference type="PhylomeDB" id="Q8LJW3"/>
<dbReference type="PRO" id="PR:Q8LJW3"/>
<dbReference type="Proteomes" id="UP000006548">
    <property type="component" value="Chromosome 1"/>
</dbReference>
<dbReference type="ExpressionAtlas" id="Q8LJW3">
    <property type="expression patterns" value="baseline and differential"/>
</dbReference>
<dbReference type="GO" id="GO:0009506">
    <property type="term" value="C:plasmodesma"/>
    <property type="evidence" value="ECO:0000314"/>
    <property type="project" value="CACAO"/>
</dbReference>
<dbReference type="CDD" id="cd04895">
    <property type="entry name" value="ACT_ACR_1"/>
    <property type="match status" value="1"/>
</dbReference>
<dbReference type="CDD" id="cd04897">
    <property type="entry name" value="ACT_ACR_3"/>
    <property type="match status" value="1"/>
</dbReference>
<dbReference type="FunFam" id="3.30.70.260:FF:000061">
    <property type="entry name" value="ACT domain repeat 1"/>
    <property type="match status" value="1"/>
</dbReference>
<dbReference type="Gene3D" id="3.30.70.260">
    <property type="match status" value="1"/>
</dbReference>
<dbReference type="InterPro" id="IPR040217">
    <property type="entry name" value="ACR1-12"/>
</dbReference>
<dbReference type="InterPro" id="IPR045865">
    <property type="entry name" value="ACT-like_dom_sf"/>
</dbReference>
<dbReference type="InterPro" id="IPR002912">
    <property type="entry name" value="ACT_dom"/>
</dbReference>
<dbReference type="PANTHER" id="PTHR31096:SF22">
    <property type="entry name" value="ACT DOMAIN-CONTAINING PROTEIN ACR4"/>
    <property type="match status" value="1"/>
</dbReference>
<dbReference type="PANTHER" id="PTHR31096">
    <property type="entry name" value="ACT DOMAIN-CONTAINING PROTEIN ACR4-RELATED"/>
    <property type="match status" value="1"/>
</dbReference>
<dbReference type="Pfam" id="PF01842">
    <property type="entry name" value="ACT"/>
    <property type="match status" value="1"/>
</dbReference>
<dbReference type="Pfam" id="PF13740">
    <property type="entry name" value="ACT_6"/>
    <property type="match status" value="1"/>
</dbReference>
<dbReference type="Pfam" id="PF24931">
    <property type="entry name" value="ACT_ACR9_3rd"/>
    <property type="match status" value="1"/>
</dbReference>
<dbReference type="SUPFAM" id="SSF55021">
    <property type="entry name" value="ACT-like"/>
    <property type="match status" value="3"/>
</dbReference>
<dbReference type="PROSITE" id="PS51671">
    <property type="entry name" value="ACT"/>
    <property type="match status" value="4"/>
</dbReference>